<comment type="function">
    <text evidence="1">Involved in chemotaxis. Part of a chemotaxis signal transduction system that modulates chemotaxis in response to various stimuli. Catalyzes the demethylation of specific methylglutamate residues introduced into the chemoreceptors (methyl-accepting chemotaxis proteins or MCP) by CheR. Also mediates the irreversible deamidation of specific glutamine residues to glutamic acid.</text>
</comment>
<comment type="catalytic activity">
    <reaction evidence="1">
        <text>[protein]-L-glutamate 5-O-methyl ester + H2O = L-glutamyl-[protein] + methanol + H(+)</text>
        <dbReference type="Rhea" id="RHEA:23236"/>
        <dbReference type="Rhea" id="RHEA-COMP:10208"/>
        <dbReference type="Rhea" id="RHEA-COMP:10311"/>
        <dbReference type="ChEBI" id="CHEBI:15377"/>
        <dbReference type="ChEBI" id="CHEBI:15378"/>
        <dbReference type="ChEBI" id="CHEBI:17790"/>
        <dbReference type="ChEBI" id="CHEBI:29973"/>
        <dbReference type="ChEBI" id="CHEBI:82795"/>
        <dbReference type="EC" id="3.1.1.61"/>
    </reaction>
</comment>
<comment type="catalytic activity">
    <reaction evidence="1">
        <text>L-glutaminyl-[protein] + H2O = L-glutamyl-[protein] + NH4(+)</text>
        <dbReference type="Rhea" id="RHEA:16441"/>
        <dbReference type="Rhea" id="RHEA-COMP:10207"/>
        <dbReference type="Rhea" id="RHEA-COMP:10208"/>
        <dbReference type="ChEBI" id="CHEBI:15377"/>
        <dbReference type="ChEBI" id="CHEBI:28938"/>
        <dbReference type="ChEBI" id="CHEBI:29973"/>
        <dbReference type="ChEBI" id="CHEBI:30011"/>
        <dbReference type="EC" id="3.5.1.44"/>
    </reaction>
</comment>
<comment type="subcellular location">
    <subcellularLocation>
        <location evidence="1">Cytoplasm</location>
    </subcellularLocation>
</comment>
<comment type="domain">
    <text evidence="1">Contains a C-terminal catalytic domain, and an N-terminal region which modulates catalytic activity.</text>
</comment>
<comment type="PTM">
    <text evidence="1">Phosphorylated by CheA. Phosphorylation of the N-terminal regulatory domain activates the methylesterase activity.</text>
</comment>
<comment type="similarity">
    <text evidence="1">Belongs to the CheB family.</text>
</comment>
<gene>
    <name evidence="1" type="primary">cheB</name>
    <name type="ordered locus">VP2228</name>
</gene>
<proteinExistence type="inferred from homology"/>
<evidence type="ECO:0000255" key="1">
    <source>
        <dbReference type="HAMAP-Rule" id="MF_00099"/>
    </source>
</evidence>
<evidence type="ECO:0000256" key="2">
    <source>
        <dbReference type="SAM" id="MobiDB-lite"/>
    </source>
</evidence>
<evidence type="ECO:0000305" key="3"/>
<dbReference type="EC" id="3.1.1.61" evidence="1"/>
<dbReference type="EC" id="3.5.1.44" evidence="1"/>
<dbReference type="EMBL" id="AF069392">
    <property type="protein sequence ID" value="AAF32418.1"/>
    <property type="molecule type" value="Genomic_DNA"/>
</dbReference>
<dbReference type="EMBL" id="BA000031">
    <property type="protein sequence ID" value="BAC60491.1"/>
    <property type="molecule type" value="Genomic_DNA"/>
</dbReference>
<dbReference type="RefSeq" id="NP_798607.1">
    <property type="nucleotide sequence ID" value="NC_004603.1"/>
</dbReference>
<dbReference type="RefSeq" id="WP_005479477.1">
    <property type="nucleotide sequence ID" value="NC_004603.1"/>
</dbReference>
<dbReference type="SMR" id="Q87MK5"/>
<dbReference type="GeneID" id="1189741"/>
<dbReference type="KEGG" id="vpa:VP2228"/>
<dbReference type="PATRIC" id="fig|223926.6.peg.2131"/>
<dbReference type="eggNOG" id="COG2201">
    <property type="taxonomic scope" value="Bacteria"/>
</dbReference>
<dbReference type="HOGENOM" id="CLU_000445_51_0_6"/>
<dbReference type="Proteomes" id="UP000002493">
    <property type="component" value="Chromosome 1"/>
</dbReference>
<dbReference type="GO" id="GO:0005737">
    <property type="term" value="C:cytoplasm"/>
    <property type="evidence" value="ECO:0007669"/>
    <property type="project" value="UniProtKB-SubCell"/>
</dbReference>
<dbReference type="GO" id="GO:0000156">
    <property type="term" value="F:phosphorelay response regulator activity"/>
    <property type="evidence" value="ECO:0007669"/>
    <property type="project" value="InterPro"/>
</dbReference>
<dbReference type="GO" id="GO:0008984">
    <property type="term" value="F:protein-glutamate methylesterase activity"/>
    <property type="evidence" value="ECO:0007669"/>
    <property type="project" value="UniProtKB-UniRule"/>
</dbReference>
<dbReference type="GO" id="GO:0050568">
    <property type="term" value="F:protein-glutamine glutaminase activity"/>
    <property type="evidence" value="ECO:0007669"/>
    <property type="project" value="UniProtKB-UniRule"/>
</dbReference>
<dbReference type="GO" id="GO:0006935">
    <property type="term" value="P:chemotaxis"/>
    <property type="evidence" value="ECO:0007669"/>
    <property type="project" value="UniProtKB-UniRule"/>
</dbReference>
<dbReference type="CDD" id="cd16432">
    <property type="entry name" value="CheB_Rec"/>
    <property type="match status" value="1"/>
</dbReference>
<dbReference type="CDD" id="cd17541">
    <property type="entry name" value="REC_CheB-like"/>
    <property type="match status" value="1"/>
</dbReference>
<dbReference type="FunFam" id="3.40.50.2300:FF:000077">
    <property type="entry name" value="Chemotaxis response regulator"/>
    <property type="match status" value="1"/>
</dbReference>
<dbReference type="FunFam" id="3.40.50.180:FF:000001">
    <property type="entry name" value="Protein-glutamate methylesterase/protein-glutamine glutaminase"/>
    <property type="match status" value="1"/>
</dbReference>
<dbReference type="Gene3D" id="3.40.50.2300">
    <property type="match status" value="1"/>
</dbReference>
<dbReference type="Gene3D" id="3.40.50.180">
    <property type="entry name" value="Methylesterase CheB, C-terminal domain"/>
    <property type="match status" value="1"/>
</dbReference>
<dbReference type="HAMAP" id="MF_00099">
    <property type="entry name" value="CheB_chemtxs"/>
    <property type="match status" value="1"/>
</dbReference>
<dbReference type="InterPro" id="IPR008248">
    <property type="entry name" value="CheB-like"/>
</dbReference>
<dbReference type="InterPro" id="IPR035909">
    <property type="entry name" value="CheB_C"/>
</dbReference>
<dbReference type="InterPro" id="IPR011006">
    <property type="entry name" value="CheY-like_superfamily"/>
</dbReference>
<dbReference type="InterPro" id="IPR000673">
    <property type="entry name" value="Sig_transdc_resp-reg_Me-estase"/>
</dbReference>
<dbReference type="InterPro" id="IPR001789">
    <property type="entry name" value="Sig_transdc_resp-reg_receiver"/>
</dbReference>
<dbReference type="NCBIfam" id="NF001965">
    <property type="entry name" value="PRK00742.1"/>
    <property type="match status" value="1"/>
</dbReference>
<dbReference type="PANTHER" id="PTHR42872">
    <property type="entry name" value="PROTEIN-GLUTAMATE METHYLESTERASE/PROTEIN-GLUTAMINE GLUTAMINASE"/>
    <property type="match status" value="1"/>
</dbReference>
<dbReference type="PANTHER" id="PTHR42872:SF3">
    <property type="entry name" value="PROTEIN-GLUTAMATE METHYLESTERASE_PROTEIN-GLUTAMINE GLUTAMINASE 1"/>
    <property type="match status" value="1"/>
</dbReference>
<dbReference type="Pfam" id="PF01339">
    <property type="entry name" value="CheB_methylest"/>
    <property type="match status" value="1"/>
</dbReference>
<dbReference type="Pfam" id="PF00072">
    <property type="entry name" value="Response_reg"/>
    <property type="match status" value="1"/>
</dbReference>
<dbReference type="PIRSF" id="PIRSF000876">
    <property type="entry name" value="RR_chemtxs_CheB"/>
    <property type="match status" value="1"/>
</dbReference>
<dbReference type="SMART" id="SM00448">
    <property type="entry name" value="REC"/>
    <property type="match status" value="1"/>
</dbReference>
<dbReference type="SUPFAM" id="SSF52172">
    <property type="entry name" value="CheY-like"/>
    <property type="match status" value="1"/>
</dbReference>
<dbReference type="SUPFAM" id="SSF52738">
    <property type="entry name" value="Methylesterase CheB, C-terminal domain"/>
    <property type="match status" value="1"/>
</dbReference>
<dbReference type="PROSITE" id="PS50122">
    <property type="entry name" value="CHEB"/>
    <property type="match status" value="1"/>
</dbReference>
<dbReference type="PROSITE" id="PS50110">
    <property type="entry name" value="RESPONSE_REGULATORY"/>
    <property type="match status" value="1"/>
</dbReference>
<protein>
    <recommendedName>
        <fullName evidence="1">Protein-glutamate methylesterase/protein-glutamine glutaminase</fullName>
        <ecNumber evidence="1">3.1.1.61</ecNumber>
        <ecNumber evidence="1">3.5.1.44</ecNumber>
    </recommendedName>
</protein>
<accession>Q87MK5</accession>
<accession>Q9LB11</accession>
<name>CHEB1_VIBPA</name>
<sequence>MAIKVLVVDDSSFFRRRVSEIINSESRLEVIDVAVNGREAVEKAKALKPDVITMDIEMPVMDGITAVREIMAASPTPILMFSSLTHDGAKATLDALDAGALDFLPKKFEDIARNRDEAVSLLQQRVIQIASKRAFMRRPVARPAAATSSARPLASRTAAPAASAPARPATTKFRASGKKYQLTAIGTSTGGPVALQKILTRLPMNYPHPIVLIQHMPATFTAAFASRLNTLCKIQVKEAQDGDVLQAGVAYLAPGGKQMMIDGRAGAARLRIIDGGDRMNYKPCVDVTFGSAAKVYGDKVLSMVLTGMGADGREGARMLKSAGSTIWAQDEESCVVYGMPQAVAKAGISSEDLPLDRIAERMLVEVGLA</sequence>
<organism>
    <name type="scientific">Vibrio parahaemolyticus serotype O3:K6 (strain RIMD 2210633)</name>
    <dbReference type="NCBI Taxonomy" id="223926"/>
    <lineage>
        <taxon>Bacteria</taxon>
        <taxon>Pseudomonadati</taxon>
        <taxon>Pseudomonadota</taxon>
        <taxon>Gammaproteobacteria</taxon>
        <taxon>Vibrionales</taxon>
        <taxon>Vibrionaceae</taxon>
        <taxon>Vibrio</taxon>
    </lineage>
</organism>
<keyword id="KW-0145">Chemotaxis</keyword>
<keyword id="KW-0963">Cytoplasm</keyword>
<keyword id="KW-0378">Hydrolase</keyword>
<keyword id="KW-0597">Phosphoprotein</keyword>
<feature type="chain" id="PRO_0000158038" description="Protein-glutamate methylesterase/protein-glutamine glutaminase">
    <location>
        <begin position="1"/>
        <end position="369"/>
    </location>
</feature>
<feature type="domain" description="Response regulatory" evidence="1">
    <location>
        <begin position="4"/>
        <end position="121"/>
    </location>
</feature>
<feature type="domain" description="CheB-type methylesterase" evidence="1">
    <location>
        <begin position="176"/>
        <end position="369"/>
    </location>
</feature>
<feature type="region of interest" description="Disordered" evidence="2">
    <location>
        <begin position="146"/>
        <end position="175"/>
    </location>
</feature>
<feature type="compositionally biased region" description="Low complexity" evidence="2">
    <location>
        <begin position="146"/>
        <end position="171"/>
    </location>
</feature>
<feature type="active site" evidence="1">
    <location>
        <position position="188"/>
    </location>
</feature>
<feature type="active site" evidence="1">
    <location>
        <position position="215"/>
    </location>
</feature>
<feature type="active site" evidence="1">
    <location>
        <position position="311"/>
    </location>
</feature>
<feature type="modified residue" description="4-aspartylphosphate" evidence="1">
    <location>
        <position position="55"/>
    </location>
</feature>
<feature type="sequence conflict" description="In Ref. 1; AAF32418." evidence="3" ref="1">
    <original>S</original>
    <variation>A</variation>
    <location>
        <position position="149"/>
    </location>
</feature>
<feature type="sequence conflict" description="In Ref. 1; AAF32418." evidence="3" ref="1">
    <original>T</original>
    <variation>A</variation>
    <location>
        <position position="170"/>
    </location>
</feature>
<feature type="sequence conflict" description="In Ref. 1; AAF32418." evidence="3" ref="1">
    <original>L</original>
    <variation>M</variation>
    <location>
        <position position="363"/>
    </location>
</feature>
<reference key="1">
    <citation type="submission" date="2000-03" db="EMBL/GenBank/DDBJ databases">
        <title>Components of the polar flagellar switch complex and assembly apparatus.</title>
        <authorList>
            <person name="Jaques S."/>
            <person name="Kim Y.K."/>
            <person name="McCarter L.L."/>
        </authorList>
    </citation>
    <scope>NUCLEOTIDE SEQUENCE [GENOMIC DNA]</scope>
    <source>
        <strain>BB22</strain>
    </source>
</reference>
<reference key="2">
    <citation type="journal article" date="2003" name="Lancet">
        <title>Genome sequence of Vibrio parahaemolyticus: a pathogenic mechanism distinct from that of V. cholerae.</title>
        <authorList>
            <person name="Makino K."/>
            <person name="Oshima K."/>
            <person name="Kurokawa K."/>
            <person name="Yokoyama K."/>
            <person name="Uda T."/>
            <person name="Tagomori K."/>
            <person name="Iijima Y."/>
            <person name="Najima M."/>
            <person name="Nakano M."/>
            <person name="Yamashita A."/>
            <person name="Kubota Y."/>
            <person name="Kimura S."/>
            <person name="Yasunaga T."/>
            <person name="Honda T."/>
            <person name="Shinagawa H."/>
            <person name="Hattori M."/>
            <person name="Iida T."/>
        </authorList>
    </citation>
    <scope>NUCLEOTIDE SEQUENCE [LARGE SCALE GENOMIC DNA]</scope>
    <source>
        <strain>RIMD 2210633</strain>
    </source>
</reference>